<name>DXS_ANASK</name>
<comment type="function">
    <text evidence="1">Catalyzes the acyloin condensation reaction between C atoms 2 and 3 of pyruvate and glyceraldehyde 3-phosphate to yield 1-deoxy-D-xylulose-5-phosphate (DXP).</text>
</comment>
<comment type="catalytic activity">
    <reaction evidence="1">
        <text>D-glyceraldehyde 3-phosphate + pyruvate + H(+) = 1-deoxy-D-xylulose 5-phosphate + CO2</text>
        <dbReference type="Rhea" id="RHEA:12605"/>
        <dbReference type="ChEBI" id="CHEBI:15361"/>
        <dbReference type="ChEBI" id="CHEBI:15378"/>
        <dbReference type="ChEBI" id="CHEBI:16526"/>
        <dbReference type="ChEBI" id="CHEBI:57792"/>
        <dbReference type="ChEBI" id="CHEBI:59776"/>
        <dbReference type="EC" id="2.2.1.7"/>
    </reaction>
</comment>
<comment type="cofactor">
    <cofactor evidence="1">
        <name>Mg(2+)</name>
        <dbReference type="ChEBI" id="CHEBI:18420"/>
    </cofactor>
    <text evidence="1">Binds 1 Mg(2+) ion per subunit.</text>
</comment>
<comment type="cofactor">
    <cofactor evidence="1">
        <name>thiamine diphosphate</name>
        <dbReference type="ChEBI" id="CHEBI:58937"/>
    </cofactor>
    <text evidence="1">Binds 1 thiamine pyrophosphate per subunit.</text>
</comment>
<comment type="pathway">
    <text evidence="1">Metabolic intermediate biosynthesis; 1-deoxy-D-xylulose 5-phosphate biosynthesis; 1-deoxy-D-xylulose 5-phosphate from D-glyceraldehyde 3-phosphate and pyruvate: step 1/1.</text>
</comment>
<comment type="subunit">
    <text evidence="1">Homodimer.</text>
</comment>
<comment type="similarity">
    <text evidence="1">Belongs to the transketolase family. DXPS subfamily.</text>
</comment>
<evidence type="ECO:0000255" key="1">
    <source>
        <dbReference type="HAMAP-Rule" id="MF_00315"/>
    </source>
</evidence>
<dbReference type="EC" id="2.2.1.7" evidence="1"/>
<dbReference type="EMBL" id="CP001131">
    <property type="protein sequence ID" value="ACG72390.1"/>
    <property type="molecule type" value="Genomic_DNA"/>
</dbReference>
<dbReference type="RefSeq" id="WP_012525216.1">
    <property type="nucleotide sequence ID" value="NC_011145.1"/>
</dbReference>
<dbReference type="SMR" id="B4UHF5"/>
<dbReference type="KEGG" id="ank:AnaeK_1157"/>
<dbReference type="HOGENOM" id="CLU_009227_1_4_7"/>
<dbReference type="OrthoDB" id="9803371at2"/>
<dbReference type="UniPathway" id="UPA00064">
    <property type="reaction ID" value="UER00091"/>
</dbReference>
<dbReference type="Proteomes" id="UP000001871">
    <property type="component" value="Chromosome"/>
</dbReference>
<dbReference type="GO" id="GO:0005829">
    <property type="term" value="C:cytosol"/>
    <property type="evidence" value="ECO:0007669"/>
    <property type="project" value="TreeGrafter"/>
</dbReference>
<dbReference type="GO" id="GO:0008661">
    <property type="term" value="F:1-deoxy-D-xylulose-5-phosphate synthase activity"/>
    <property type="evidence" value="ECO:0007669"/>
    <property type="project" value="UniProtKB-UniRule"/>
</dbReference>
<dbReference type="GO" id="GO:0000287">
    <property type="term" value="F:magnesium ion binding"/>
    <property type="evidence" value="ECO:0007669"/>
    <property type="project" value="UniProtKB-UniRule"/>
</dbReference>
<dbReference type="GO" id="GO:0030976">
    <property type="term" value="F:thiamine pyrophosphate binding"/>
    <property type="evidence" value="ECO:0007669"/>
    <property type="project" value="UniProtKB-UniRule"/>
</dbReference>
<dbReference type="GO" id="GO:0052865">
    <property type="term" value="P:1-deoxy-D-xylulose 5-phosphate biosynthetic process"/>
    <property type="evidence" value="ECO:0007669"/>
    <property type="project" value="UniProtKB-UniPathway"/>
</dbReference>
<dbReference type="GO" id="GO:0019288">
    <property type="term" value="P:isopentenyl diphosphate biosynthetic process, methylerythritol 4-phosphate pathway"/>
    <property type="evidence" value="ECO:0007669"/>
    <property type="project" value="TreeGrafter"/>
</dbReference>
<dbReference type="GO" id="GO:0016114">
    <property type="term" value="P:terpenoid biosynthetic process"/>
    <property type="evidence" value="ECO:0007669"/>
    <property type="project" value="UniProtKB-UniRule"/>
</dbReference>
<dbReference type="GO" id="GO:0009228">
    <property type="term" value="P:thiamine biosynthetic process"/>
    <property type="evidence" value="ECO:0007669"/>
    <property type="project" value="UniProtKB-UniRule"/>
</dbReference>
<dbReference type="CDD" id="cd02007">
    <property type="entry name" value="TPP_DXS"/>
    <property type="match status" value="1"/>
</dbReference>
<dbReference type="CDD" id="cd07033">
    <property type="entry name" value="TPP_PYR_DXS_TK_like"/>
    <property type="match status" value="1"/>
</dbReference>
<dbReference type="FunFam" id="3.40.50.920:FF:000002">
    <property type="entry name" value="1-deoxy-D-xylulose-5-phosphate synthase"/>
    <property type="match status" value="1"/>
</dbReference>
<dbReference type="FunFam" id="3.40.50.970:FF:000005">
    <property type="entry name" value="1-deoxy-D-xylulose-5-phosphate synthase"/>
    <property type="match status" value="1"/>
</dbReference>
<dbReference type="Gene3D" id="3.40.50.920">
    <property type="match status" value="1"/>
</dbReference>
<dbReference type="Gene3D" id="3.40.50.970">
    <property type="match status" value="2"/>
</dbReference>
<dbReference type="HAMAP" id="MF_00315">
    <property type="entry name" value="DXP_synth"/>
    <property type="match status" value="1"/>
</dbReference>
<dbReference type="InterPro" id="IPR005477">
    <property type="entry name" value="Dxylulose-5-P_synthase"/>
</dbReference>
<dbReference type="InterPro" id="IPR029061">
    <property type="entry name" value="THDP-binding"/>
</dbReference>
<dbReference type="InterPro" id="IPR009014">
    <property type="entry name" value="Transketo_C/PFOR_II"/>
</dbReference>
<dbReference type="InterPro" id="IPR005475">
    <property type="entry name" value="Transketolase-like_Pyr-bd"/>
</dbReference>
<dbReference type="InterPro" id="IPR033248">
    <property type="entry name" value="Transketolase_C"/>
</dbReference>
<dbReference type="InterPro" id="IPR049557">
    <property type="entry name" value="Transketolase_CS"/>
</dbReference>
<dbReference type="NCBIfam" id="TIGR00204">
    <property type="entry name" value="dxs"/>
    <property type="match status" value="1"/>
</dbReference>
<dbReference type="NCBIfam" id="NF003933">
    <property type="entry name" value="PRK05444.2-2"/>
    <property type="match status" value="1"/>
</dbReference>
<dbReference type="PANTHER" id="PTHR43322">
    <property type="entry name" value="1-D-DEOXYXYLULOSE 5-PHOSPHATE SYNTHASE-RELATED"/>
    <property type="match status" value="1"/>
</dbReference>
<dbReference type="PANTHER" id="PTHR43322:SF5">
    <property type="entry name" value="1-DEOXY-D-XYLULOSE-5-PHOSPHATE SYNTHASE, CHLOROPLASTIC"/>
    <property type="match status" value="1"/>
</dbReference>
<dbReference type="Pfam" id="PF13292">
    <property type="entry name" value="DXP_synthase_N"/>
    <property type="match status" value="1"/>
</dbReference>
<dbReference type="Pfam" id="PF02779">
    <property type="entry name" value="Transket_pyr"/>
    <property type="match status" value="1"/>
</dbReference>
<dbReference type="Pfam" id="PF02780">
    <property type="entry name" value="Transketolase_C"/>
    <property type="match status" value="1"/>
</dbReference>
<dbReference type="SMART" id="SM00861">
    <property type="entry name" value="Transket_pyr"/>
    <property type="match status" value="1"/>
</dbReference>
<dbReference type="SUPFAM" id="SSF52518">
    <property type="entry name" value="Thiamin diphosphate-binding fold (THDP-binding)"/>
    <property type="match status" value="2"/>
</dbReference>
<dbReference type="SUPFAM" id="SSF52922">
    <property type="entry name" value="TK C-terminal domain-like"/>
    <property type="match status" value="1"/>
</dbReference>
<dbReference type="PROSITE" id="PS00801">
    <property type="entry name" value="TRANSKETOLASE_1"/>
    <property type="match status" value="1"/>
</dbReference>
<reference key="1">
    <citation type="submission" date="2008-08" db="EMBL/GenBank/DDBJ databases">
        <title>Complete sequence of Anaeromyxobacter sp. K.</title>
        <authorList>
            <consortium name="US DOE Joint Genome Institute"/>
            <person name="Lucas S."/>
            <person name="Copeland A."/>
            <person name="Lapidus A."/>
            <person name="Glavina del Rio T."/>
            <person name="Dalin E."/>
            <person name="Tice H."/>
            <person name="Bruce D."/>
            <person name="Goodwin L."/>
            <person name="Pitluck S."/>
            <person name="Saunders E."/>
            <person name="Brettin T."/>
            <person name="Detter J.C."/>
            <person name="Han C."/>
            <person name="Larimer F."/>
            <person name="Land M."/>
            <person name="Hauser L."/>
            <person name="Kyrpides N."/>
            <person name="Ovchinnikiva G."/>
            <person name="Beliaev A."/>
        </authorList>
    </citation>
    <scope>NUCLEOTIDE SEQUENCE [LARGE SCALE GENOMIC DNA]</scope>
    <source>
        <strain>K</strain>
    </source>
</reference>
<feature type="chain" id="PRO_1000115719" description="1-deoxy-D-xylulose-5-phosphate synthase">
    <location>
        <begin position="1"/>
        <end position="636"/>
    </location>
</feature>
<feature type="binding site" evidence="1">
    <location>
        <position position="74"/>
    </location>
    <ligand>
        <name>thiamine diphosphate</name>
        <dbReference type="ChEBI" id="CHEBI:58937"/>
    </ligand>
</feature>
<feature type="binding site" evidence="1">
    <location>
        <begin position="115"/>
        <end position="117"/>
    </location>
    <ligand>
        <name>thiamine diphosphate</name>
        <dbReference type="ChEBI" id="CHEBI:58937"/>
    </ligand>
</feature>
<feature type="binding site" evidence="1">
    <location>
        <position position="146"/>
    </location>
    <ligand>
        <name>Mg(2+)</name>
        <dbReference type="ChEBI" id="CHEBI:18420"/>
    </ligand>
</feature>
<feature type="binding site" evidence="1">
    <location>
        <begin position="147"/>
        <end position="148"/>
    </location>
    <ligand>
        <name>thiamine diphosphate</name>
        <dbReference type="ChEBI" id="CHEBI:58937"/>
    </ligand>
</feature>
<feature type="binding site" evidence="1">
    <location>
        <position position="175"/>
    </location>
    <ligand>
        <name>Mg(2+)</name>
        <dbReference type="ChEBI" id="CHEBI:18420"/>
    </ligand>
</feature>
<feature type="binding site" evidence="1">
    <location>
        <position position="175"/>
    </location>
    <ligand>
        <name>thiamine diphosphate</name>
        <dbReference type="ChEBI" id="CHEBI:58937"/>
    </ligand>
</feature>
<feature type="binding site" evidence="1">
    <location>
        <position position="285"/>
    </location>
    <ligand>
        <name>thiamine diphosphate</name>
        <dbReference type="ChEBI" id="CHEBI:58937"/>
    </ligand>
</feature>
<feature type="binding site" evidence="1">
    <location>
        <position position="368"/>
    </location>
    <ligand>
        <name>thiamine diphosphate</name>
        <dbReference type="ChEBI" id="CHEBI:58937"/>
    </ligand>
</feature>
<organism>
    <name type="scientific">Anaeromyxobacter sp. (strain K)</name>
    <dbReference type="NCBI Taxonomy" id="447217"/>
    <lineage>
        <taxon>Bacteria</taxon>
        <taxon>Pseudomonadati</taxon>
        <taxon>Myxococcota</taxon>
        <taxon>Myxococcia</taxon>
        <taxon>Myxococcales</taxon>
        <taxon>Cystobacterineae</taxon>
        <taxon>Anaeromyxobacteraceae</taxon>
        <taxon>Anaeromyxobacter</taxon>
    </lineage>
</organism>
<sequence>MGRLLDTIDSPTDLKKVPVEQLPALCQEIREQIIQTCARNGGHLGSSLGAVEINVALHHVFSSPQDKLVWDVGHQAYAHKLLTGRREAFRTIRTEGGLAGFPERHESAHDAFGVGHASTAISAALGMIEAKRVTGEPGKVVAVVGDGAMTGGVAFEGLNQAGYLGRNLLVVLNDNEMSISPNVGALSEWFSKKFASRTYNRWRRQVKEFLESVPKGPEAIEIIRHGINATKALVTPGILFEGLGFHYVGPVDGHDVKGLVETFQKLAIFDGPVLLHAITTKGKGYHPAESDKATRGHGLSFFDVATGKPVKKSPGAKAYTDLFAEALCEEMEHDPRVVAITAAMLEGTGLIKAKQRFPDRTYDVGIAEQHAVTFAAGLACEGIRPVVAIYSTFLQRAYDQIIHDVALQKLPVTFALDRGGLVGADGKTHQGAFDLAYLRCVPGLVVMAPSDENELRHMLHTSLQHEGPAALRYPRGAGEGVALEPARVLEIGKGRLVRNVPGKPDVCVVAAGTTLKAALAAAEALAAEGVAATVVDPRFVKPLDEELICAEAARAKRVVTVEEGCLAGGFGTACLEAFERRGLLEAGLGVRRLGIPDEFITHAEQAKQRAWVGIDADAIAAACRALVGDRKARGVA</sequence>
<accession>B4UHF5</accession>
<proteinExistence type="inferred from homology"/>
<keyword id="KW-0414">Isoprene biosynthesis</keyword>
<keyword id="KW-0460">Magnesium</keyword>
<keyword id="KW-0479">Metal-binding</keyword>
<keyword id="KW-0784">Thiamine biosynthesis</keyword>
<keyword id="KW-0786">Thiamine pyrophosphate</keyword>
<keyword id="KW-0808">Transferase</keyword>
<protein>
    <recommendedName>
        <fullName evidence="1">1-deoxy-D-xylulose-5-phosphate synthase</fullName>
        <ecNumber evidence="1">2.2.1.7</ecNumber>
    </recommendedName>
    <alternativeName>
        <fullName evidence="1">1-deoxyxylulose-5-phosphate synthase</fullName>
        <shortName evidence="1">DXP synthase</shortName>
        <shortName evidence="1">DXPS</shortName>
    </alternativeName>
</protein>
<gene>
    <name evidence="1" type="primary">dxs</name>
    <name type="ordered locus">AnaeK_1157</name>
</gene>